<gene>
    <name type="primary">DEGS1</name>
    <name type="synonym">DES1</name>
</gene>
<sequence>MGNRVSREDFEWVYTDQPHATRRQEILAKYPEIKSLMKPDSNLIWIVIMMVLTQFVAFYLVKDLDWKWVLFWAYAFGSCVNHSMTLAIHEVSHNSAFGHYKAMWNRWFGIFANLPIGVPYSVSFKRYHMDHHRYLGADGIDVDIPTDFEGWFFCTTFRKFIWVILQPLFYAFRPLFINPKPISYLEIINTVIQITFDIVVYYVLGVKSLVYMLAASLFGLGLHPISGHFIAEHYMFLKGHETYSYYGPLNLLTFNVGYHNEHHDFPNIPGKSLPLVRKIAAEYYDNLPHYNSWIKVLYDFVTDDTISPYSRMKRHLKGNEVQE</sequence>
<evidence type="ECO:0000250" key="1">
    <source>
        <dbReference type="UniProtKB" id="O09005"/>
    </source>
</evidence>
<evidence type="ECO:0000250" key="2">
    <source>
        <dbReference type="UniProtKB" id="O15121"/>
    </source>
</evidence>
<evidence type="ECO:0000250" key="3">
    <source>
        <dbReference type="UniProtKB" id="Q5F3C1"/>
    </source>
</evidence>
<evidence type="ECO:0000255" key="4"/>
<evidence type="ECO:0000305" key="5"/>
<organism>
    <name type="scientific">Bos taurus</name>
    <name type="common">Bovine</name>
    <dbReference type="NCBI Taxonomy" id="9913"/>
    <lineage>
        <taxon>Eukaryota</taxon>
        <taxon>Metazoa</taxon>
        <taxon>Chordata</taxon>
        <taxon>Craniata</taxon>
        <taxon>Vertebrata</taxon>
        <taxon>Euteleostomi</taxon>
        <taxon>Mammalia</taxon>
        <taxon>Eutheria</taxon>
        <taxon>Laurasiatheria</taxon>
        <taxon>Artiodactyla</taxon>
        <taxon>Ruminantia</taxon>
        <taxon>Pecora</taxon>
        <taxon>Bovidae</taxon>
        <taxon>Bovinae</taxon>
        <taxon>Bos</taxon>
    </lineage>
</organism>
<protein>
    <recommendedName>
        <fullName evidence="5">Sphingolipid delta(4)-desaturase DES1</fullName>
        <ecNumber evidence="2">1.14.19.17</ecNumber>
    </recommendedName>
    <alternativeName>
        <fullName>Degenerative spermatocyte homolog 1</fullName>
    </alternativeName>
    <alternativeName>
        <fullName>Dihydroceramide desaturase-1</fullName>
    </alternativeName>
    <alternativeName>
        <fullName>Retinol isomerase</fullName>
        <ecNumber evidence="3">5.2.1.-</ecNumber>
    </alternativeName>
</protein>
<dbReference type="EC" id="1.14.19.17" evidence="2"/>
<dbReference type="EC" id="5.2.1.-" evidence="3"/>
<dbReference type="EMBL" id="BC103031">
    <property type="protein sequence ID" value="AAI03032.1"/>
    <property type="molecule type" value="mRNA"/>
</dbReference>
<dbReference type="RefSeq" id="NP_001029461.1">
    <property type="nucleotide sequence ID" value="NM_001034289.2"/>
</dbReference>
<dbReference type="FunCoup" id="Q3ZBY7">
    <property type="interactions" value="2411"/>
</dbReference>
<dbReference type="STRING" id="9913.ENSBTAP00000016887"/>
<dbReference type="PaxDb" id="9913-ENSBTAP00000016887"/>
<dbReference type="Ensembl" id="ENSBTAT00000016887.5">
    <property type="protein sequence ID" value="ENSBTAP00000016887.5"/>
    <property type="gene ID" value="ENSBTAG00000012705.5"/>
</dbReference>
<dbReference type="GeneID" id="507290"/>
<dbReference type="KEGG" id="bta:507290"/>
<dbReference type="CTD" id="8560"/>
<dbReference type="VEuPathDB" id="HostDB:ENSBTAG00000012705"/>
<dbReference type="VGNC" id="VGNC:27990">
    <property type="gene designation" value="DEGS1"/>
</dbReference>
<dbReference type="eggNOG" id="KOG2987">
    <property type="taxonomic scope" value="Eukaryota"/>
</dbReference>
<dbReference type="GeneTree" id="ENSGT00390000013448"/>
<dbReference type="HOGENOM" id="CLU_032156_0_0_1"/>
<dbReference type="InParanoid" id="Q3ZBY7"/>
<dbReference type="OMA" id="GATCNQN"/>
<dbReference type="OrthoDB" id="200948at2759"/>
<dbReference type="Reactome" id="R-BTA-1660661">
    <property type="pathway name" value="Sphingolipid de novo biosynthesis"/>
</dbReference>
<dbReference type="Reactome" id="R-BTA-6798695">
    <property type="pathway name" value="Neutrophil degranulation"/>
</dbReference>
<dbReference type="Proteomes" id="UP000009136">
    <property type="component" value="Chromosome 16"/>
</dbReference>
<dbReference type="Bgee" id="ENSBTAG00000012705">
    <property type="expression patterns" value="Expressed in oocyte and 106 other cell types or tissues"/>
</dbReference>
<dbReference type="GO" id="GO:0005789">
    <property type="term" value="C:endoplasmic reticulum membrane"/>
    <property type="evidence" value="ECO:0007669"/>
    <property type="project" value="UniProtKB-SubCell"/>
</dbReference>
<dbReference type="GO" id="GO:0031966">
    <property type="term" value="C:mitochondrial membrane"/>
    <property type="evidence" value="ECO:0007669"/>
    <property type="project" value="UniProtKB-SubCell"/>
</dbReference>
<dbReference type="GO" id="GO:0016859">
    <property type="term" value="F:cis-trans isomerase activity"/>
    <property type="evidence" value="ECO:0000250"/>
    <property type="project" value="UniProtKB"/>
</dbReference>
<dbReference type="GO" id="GO:0050251">
    <property type="term" value="F:retinol isomerase activity"/>
    <property type="evidence" value="ECO:0000250"/>
    <property type="project" value="UniProtKB"/>
</dbReference>
<dbReference type="GO" id="GO:0042284">
    <property type="term" value="F:sphingolipid delta-4 desaturase activity"/>
    <property type="evidence" value="ECO:0000318"/>
    <property type="project" value="GO_Central"/>
</dbReference>
<dbReference type="GO" id="GO:0046513">
    <property type="term" value="P:ceramide biosynthetic process"/>
    <property type="evidence" value="ECO:0000318"/>
    <property type="project" value="GO_Central"/>
</dbReference>
<dbReference type="GO" id="GO:0006633">
    <property type="term" value="P:fatty acid biosynthetic process"/>
    <property type="evidence" value="ECO:0007669"/>
    <property type="project" value="UniProtKB-KW"/>
</dbReference>
<dbReference type="GO" id="GO:0043217">
    <property type="term" value="P:myelin maintenance"/>
    <property type="evidence" value="ECO:0000250"/>
    <property type="project" value="UniProtKB"/>
</dbReference>
<dbReference type="CDD" id="cd03508">
    <property type="entry name" value="Delta4-sphingolipid-FADS-like"/>
    <property type="match status" value="1"/>
</dbReference>
<dbReference type="InterPro" id="IPR011388">
    <property type="entry name" value="DES1/DES2"/>
</dbReference>
<dbReference type="InterPro" id="IPR005804">
    <property type="entry name" value="FA_desaturase_dom"/>
</dbReference>
<dbReference type="InterPro" id="IPR013866">
    <property type="entry name" value="Sphingolipid_d4-desaturase_N"/>
</dbReference>
<dbReference type="PANTHER" id="PTHR12879">
    <property type="entry name" value="SPHINGOLIPID DELTA 4 DESATURASE/C-4 HYDROXYLASE PROTEIN DES2"/>
    <property type="match status" value="1"/>
</dbReference>
<dbReference type="PANTHER" id="PTHR12879:SF2">
    <property type="entry name" value="SPHINGOLIPID DELTA(4)-DESATURASE DES1"/>
    <property type="match status" value="1"/>
</dbReference>
<dbReference type="Pfam" id="PF00487">
    <property type="entry name" value="FA_desaturase"/>
    <property type="match status" value="1"/>
</dbReference>
<dbReference type="Pfam" id="PF08557">
    <property type="entry name" value="Lipid_DES"/>
    <property type="match status" value="1"/>
</dbReference>
<dbReference type="PIRSF" id="PIRSF017228">
    <property type="entry name" value="Sphnglp_dlt4_des"/>
    <property type="match status" value="1"/>
</dbReference>
<dbReference type="SMART" id="SM01269">
    <property type="entry name" value="Lipid_DES"/>
    <property type="match status" value="1"/>
</dbReference>
<feature type="initiator methionine" description="Removed" evidence="2">
    <location>
        <position position="1"/>
    </location>
</feature>
<feature type="chain" id="PRO_0000312726" description="Sphingolipid delta(4)-desaturase DES1">
    <location>
        <begin position="2"/>
        <end position="323"/>
    </location>
</feature>
<feature type="transmembrane region" description="Helical" evidence="4">
    <location>
        <begin position="41"/>
        <end position="61"/>
    </location>
</feature>
<feature type="transmembrane region" description="Helical" evidence="4">
    <location>
        <begin position="68"/>
        <end position="88"/>
    </location>
</feature>
<feature type="transmembrane region" description="Helical" evidence="4">
    <location>
        <begin position="102"/>
        <end position="122"/>
    </location>
</feature>
<feature type="transmembrane region" description="Helical" evidence="4">
    <location>
        <begin position="152"/>
        <end position="172"/>
    </location>
</feature>
<feature type="transmembrane region" description="Helical" evidence="4">
    <location>
        <begin position="184"/>
        <end position="204"/>
    </location>
</feature>
<feature type="transmembrane region" description="Helical" evidence="4">
    <location>
        <begin position="209"/>
        <end position="229"/>
    </location>
</feature>
<feature type="short sequence motif" description="Histidine box-1" evidence="5">
    <location>
        <begin position="89"/>
        <end position="93"/>
    </location>
</feature>
<feature type="short sequence motif" description="Histidine box-2" evidence="5">
    <location>
        <begin position="128"/>
        <end position="132"/>
    </location>
</feature>
<feature type="short sequence motif" description="Histidine box-3" evidence="5">
    <location>
        <begin position="259"/>
        <end position="263"/>
    </location>
</feature>
<feature type="modified residue" description="Phosphoserine" evidence="2">
    <location>
        <position position="307"/>
    </location>
</feature>
<feature type="lipid moiety-binding region" description="N-myristoyl glycine" evidence="2">
    <location>
        <position position="2"/>
    </location>
</feature>
<proteinExistence type="evidence at transcript level"/>
<comment type="function">
    <text evidence="1 3">Has sphingolipid-delta-4-desaturase activity. Converts D-erythro-sphinganine to D-erythro-sphingosine (E-sphing-4-enine) (By similarity). Catalyzes the equilibrium isomerization of retinols (By similarity).</text>
</comment>
<comment type="catalytic activity">
    <reaction evidence="2">
        <text>an N-acylsphinganine + 2 Fe(II)-[cytochrome b5] + O2 + 2 H(+) = an N-acylsphing-4-enine + 2 Fe(III)-[cytochrome b5] + 2 H2O</text>
        <dbReference type="Rhea" id="RHEA:46544"/>
        <dbReference type="Rhea" id="RHEA-COMP:10438"/>
        <dbReference type="Rhea" id="RHEA-COMP:10439"/>
        <dbReference type="ChEBI" id="CHEBI:15377"/>
        <dbReference type="ChEBI" id="CHEBI:15378"/>
        <dbReference type="ChEBI" id="CHEBI:15379"/>
        <dbReference type="ChEBI" id="CHEBI:29033"/>
        <dbReference type="ChEBI" id="CHEBI:29034"/>
        <dbReference type="ChEBI" id="CHEBI:31488"/>
        <dbReference type="ChEBI" id="CHEBI:52639"/>
        <dbReference type="EC" id="1.14.19.17"/>
    </reaction>
    <physiologicalReaction direction="left-to-right" evidence="2">
        <dbReference type="Rhea" id="RHEA:46545"/>
    </physiologicalReaction>
</comment>
<comment type="catalytic activity">
    <reaction evidence="1">
        <text>all-trans-retinol = 11-cis-retinol</text>
        <dbReference type="Rhea" id="RHEA:19141"/>
        <dbReference type="ChEBI" id="CHEBI:16302"/>
        <dbReference type="ChEBI" id="CHEBI:17336"/>
    </reaction>
    <physiologicalReaction direction="left-to-right" evidence="1">
        <dbReference type="Rhea" id="RHEA:19142"/>
    </physiologicalReaction>
    <physiologicalReaction direction="right-to-left" evidence="1">
        <dbReference type="Rhea" id="RHEA:19143"/>
    </physiologicalReaction>
</comment>
<comment type="catalytic activity">
    <reaction evidence="3">
        <text>all-trans-retinol = 9-cis-retinol</text>
        <dbReference type="Rhea" id="RHEA:55348"/>
        <dbReference type="ChEBI" id="CHEBI:17336"/>
        <dbReference type="ChEBI" id="CHEBI:78272"/>
    </reaction>
    <physiologicalReaction direction="left-to-right" evidence="3">
        <dbReference type="Rhea" id="RHEA:55349"/>
    </physiologicalReaction>
</comment>
<comment type="catalytic activity">
    <reaction evidence="3">
        <text>all-trans-retinol = 13-cis-retinol</text>
        <dbReference type="Rhea" id="RHEA:55352"/>
        <dbReference type="ChEBI" id="CHEBI:17336"/>
        <dbReference type="ChEBI" id="CHEBI:45479"/>
    </reaction>
    <physiologicalReaction direction="left-to-right" evidence="3">
        <dbReference type="Rhea" id="RHEA:55353"/>
    </physiologicalReaction>
</comment>
<comment type="catalytic activity">
    <reaction evidence="3">
        <text>11-cis-retinol = 13-cis-retinol</text>
        <dbReference type="Rhea" id="RHEA:55356"/>
        <dbReference type="ChEBI" id="CHEBI:16302"/>
        <dbReference type="ChEBI" id="CHEBI:45479"/>
    </reaction>
    <physiologicalReaction direction="left-to-right" evidence="3">
        <dbReference type="Rhea" id="RHEA:55357"/>
    </physiologicalReaction>
</comment>
<comment type="catalytic activity">
    <reaction evidence="3">
        <text>11-cis-retinol = 9-cis-retinol</text>
        <dbReference type="Rhea" id="RHEA:55360"/>
        <dbReference type="ChEBI" id="CHEBI:16302"/>
        <dbReference type="ChEBI" id="CHEBI:78272"/>
    </reaction>
    <physiologicalReaction direction="left-to-right" evidence="3">
        <dbReference type="Rhea" id="RHEA:55361"/>
    </physiologicalReaction>
</comment>
<comment type="subunit">
    <text evidence="3">Interacts with RLBP1; the interaction increases synthesis of chromophore-precursors by DEGS1.</text>
</comment>
<comment type="subcellular location">
    <subcellularLocation>
        <location evidence="2">Mitochondrion membrane</location>
    </subcellularLocation>
    <subcellularLocation>
        <location evidence="2">Endoplasmic reticulum membrane</location>
        <topology evidence="2">Multi-pass membrane protein</topology>
    </subcellularLocation>
</comment>
<comment type="PTM">
    <text evidence="2">Myristoylation can target the enzyme to the mitochondria leading to an increase in ceramide levels.</text>
</comment>
<comment type="similarity">
    <text evidence="5">Belongs to the fatty acid desaturase type 1 family. DEGS subfamily.</text>
</comment>
<name>DEGS1_BOVIN</name>
<reference key="1">
    <citation type="submission" date="2005-08" db="EMBL/GenBank/DDBJ databases">
        <authorList>
            <consortium name="NIH - Mammalian Gene Collection (MGC) project"/>
        </authorList>
    </citation>
    <scope>NUCLEOTIDE SEQUENCE [LARGE SCALE MRNA]</scope>
    <source>
        <strain>Crossbred X Angus</strain>
        <tissue>Ileum</tissue>
    </source>
</reference>
<keyword id="KW-0256">Endoplasmic reticulum</keyword>
<keyword id="KW-0275">Fatty acid biosynthesis</keyword>
<keyword id="KW-0276">Fatty acid metabolism</keyword>
<keyword id="KW-0413">Isomerase</keyword>
<keyword id="KW-0444">Lipid biosynthesis</keyword>
<keyword id="KW-0443">Lipid metabolism</keyword>
<keyword id="KW-0449">Lipoprotein</keyword>
<keyword id="KW-0472">Membrane</keyword>
<keyword id="KW-0496">Mitochondrion</keyword>
<keyword id="KW-0519">Myristate</keyword>
<keyword id="KW-0560">Oxidoreductase</keyword>
<keyword id="KW-0597">Phosphoprotein</keyword>
<keyword id="KW-1185">Reference proteome</keyword>
<keyword id="KW-0812">Transmembrane</keyword>
<keyword id="KW-1133">Transmembrane helix</keyword>
<accession>Q3ZBY7</accession>